<sequence length="597" mass="65933">MDHIRNFSIIAHIDHGKSTLADRIIQVCGGLAAREMEAQVLDSMDIERERGITIKAQTAALSYRARDGKVYNLNLIDTPGHVDFSYEVSRSLSACEGALLVVDASQGVEAQTVANCYTAIELGVEVVPVLNKIDLPAANPENAIEEIEDVIGIDATDATRCSAKTGLGVEDVLEALIAKVPPPKGDPAAPLQALIIDSWFDNYVGVVMLVRIVNGTLRPKDKIKMMATGAQYPVEHVGVFTPKSRNLESLSAGQVGFIIAGIKELTAAKVGDTVTHVAKPATEPLPGFKEVKPQVFAGLYPVEANQYDALRESLEKLKLNDASLQYEPEVSQALGFGFRCGFLGLLHMEIVQERLEREFDMDLITTAPTVVYEVVQSDGSTIMVENPAKMPEPGRIAEVREPIVTVNLYMPQDYVGSVITLCEQKRGSQINMQYHGRQVQLTYEIPMAEIVLDFFDRLKSVSRGYASMDYEFKEYRSSDVVKVDMLINGDKVDALSIIVHRSQSQYRGREVAAKMREIIPRQMYDVAIQAAIGAHIVARENIKALRKNVLAKCYGGDITRKKKLLEKQKEGKKRMKQVGSVEIPQEAFLAILRVEDK</sequence>
<comment type="function">
    <text evidence="1">Required for accurate and efficient protein synthesis under certain stress conditions. May act as a fidelity factor of the translation reaction, by catalyzing a one-codon backward translocation of tRNAs on improperly translocated ribosomes. Back-translocation proceeds from a post-translocation (POST) complex to a pre-translocation (PRE) complex, thus giving elongation factor G a second chance to translocate the tRNAs correctly. Binds to ribosomes in a GTP-dependent manner.</text>
</comment>
<comment type="catalytic activity">
    <reaction evidence="1">
        <text>GTP + H2O = GDP + phosphate + H(+)</text>
        <dbReference type="Rhea" id="RHEA:19669"/>
        <dbReference type="ChEBI" id="CHEBI:15377"/>
        <dbReference type="ChEBI" id="CHEBI:15378"/>
        <dbReference type="ChEBI" id="CHEBI:37565"/>
        <dbReference type="ChEBI" id="CHEBI:43474"/>
        <dbReference type="ChEBI" id="CHEBI:58189"/>
        <dbReference type="EC" id="3.6.5.n1"/>
    </reaction>
</comment>
<comment type="subcellular location">
    <subcellularLocation>
        <location evidence="1">Cell inner membrane</location>
        <topology evidence="1">Peripheral membrane protein</topology>
        <orientation evidence="1">Cytoplasmic side</orientation>
    </subcellularLocation>
</comment>
<comment type="similarity">
    <text evidence="1">Belongs to the TRAFAC class translation factor GTPase superfamily. Classic translation factor GTPase family. LepA subfamily.</text>
</comment>
<proteinExistence type="inferred from homology"/>
<feature type="chain" id="PRO_1000031979" description="Elongation factor 4">
    <location>
        <begin position="1"/>
        <end position="597"/>
    </location>
</feature>
<feature type="domain" description="tr-type G">
    <location>
        <begin position="2"/>
        <end position="184"/>
    </location>
</feature>
<feature type="binding site" evidence="1">
    <location>
        <begin position="14"/>
        <end position="19"/>
    </location>
    <ligand>
        <name>GTP</name>
        <dbReference type="ChEBI" id="CHEBI:37565"/>
    </ligand>
</feature>
<feature type="binding site" evidence="1">
    <location>
        <begin position="131"/>
        <end position="134"/>
    </location>
    <ligand>
        <name>GTP</name>
        <dbReference type="ChEBI" id="CHEBI:37565"/>
    </ligand>
</feature>
<evidence type="ECO:0000255" key="1">
    <source>
        <dbReference type="HAMAP-Rule" id="MF_00071"/>
    </source>
</evidence>
<name>LEPA_BURVG</name>
<dbReference type="EC" id="3.6.5.n1" evidence="1"/>
<dbReference type="EMBL" id="CP000614">
    <property type="protein sequence ID" value="ABO54062.1"/>
    <property type="molecule type" value="Genomic_DNA"/>
</dbReference>
<dbReference type="SMR" id="A4JCQ9"/>
<dbReference type="KEGG" id="bvi:Bcep1808_1051"/>
<dbReference type="eggNOG" id="COG0481">
    <property type="taxonomic scope" value="Bacteria"/>
</dbReference>
<dbReference type="HOGENOM" id="CLU_009995_3_3_4"/>
<dbReference type="Proteomes" id="UP000002287">
    <property type="component" value="Chromosome 1"/>
</dbReference>
<dbReference type="GO" id="GO:0005886">
    <property type="term" value="C:plasma membrane"/>
    <property type="evidence" value="ECO:0007669"/>
    <property type="project" value="UniProtKB-SubCell"/>
</dbReference>
<dbReference type="GO" id="GO:0005525">
    <property type="term" value="F:GTP binding"/>
    <property type="evidence" value="ECO:0007669"/>
    <property type="project" value="UniProtKB-UniRule"/>
</dbReference>
<dbReference type="GO" id="GO:0003924">
    <property type="term" value="F:GTPase activity"/>
    <property type="evidence" value="ECO:0007669"/>
    <property type="project" value="UniProtKB-UniRule"/>
</dbReference>
<dbReference type="GO" id="GO:0097216">
    <property type="term" value="F:guanosine tetraphosphate binding"/>
    <property type="evidence" value="ECO:0007669"/>
    <property type="project" value="UniProtKB-ARBA"/>
</dbReference>
<dbReference type="GO" id="GO:0043022">
    <property type="term" value="F:ribosome binding"/>
    <property type="evidence" value="ECO:0007669"/>
    <property type="project" value="UniProtKB-UniRule"/>
</dbReference>
<dbReference type="GO" id="GO:0003746">
    <property type="term" value="F:translation elongation factor activity"/>
    <property type="evidence" value="ECO:0007669"/>
    <property type="project" value="UniProtKB-UniRule"/>
</dbReference>
<dbReference type="GO" id="GO:0045727">
    <property type="term" value="P:positive regulation of translation"/>
    <property type="evidence" value="ECO:0007669"/>
    <property type="project" value="UniProtKB-UniRule"/>
</dbReference>
<dbReference type="CDD" id="cd03699">
    <property type="entry name" value="EF4_II"/>
    <property type="match status" value="1"/>
</dbReference>
<dbReference type="CDD" id="cd16260">
    <property type="entry name" value="EF4_III"/>
    <property type="match status" value="1"/>
</dbReference>
<dbReference type="CDD" id="cd01890">
    <property type="entry name" value="LepA"/>
    <property type="match status" value="1"/>
</dbReference>
<dbReference type="CDD" id="cd03709">
    <property type="entry name" value="lepA_C"/>
    <property type="match status" value="1"/>
</dbReference>
<dbReference type="FunFam" id="3.40.50.300:FF:000078">
    <property type="entry name" value="Elongation factor 4"/>
    <property type="match status" value="1"/>
</dbReference>
<dbReference type="FunFam" id="2.40.30.10:FF:000015">
    <property type="entry name" value="Translation factor GUF1, mitochondrial"/>
    <property type="match status" value="1"/>
</dbReference>
<dbReference type="FunFam" id="3.30.70.240:FF:000007">
    <property type="entry name" value="Translation factor GUF1, mitochondrial"/>
    <property type="match status" value="1"/>
</dbReference>
<dbReference type="FunFam" id="3.30.70.2570:FF:000001">
    <property type="entry name" value="Translation factor GUF1, mitochondrial"/>
    <property type="match status" value="1"/>
</dbReference>
<dbReference type="FunFam" id="3.30.70.870:FF:000004">
    <property type="entry name" value="Translation factor GUF1, mitochondrial"/>
    <property type="match status" value="1"/>
</dbReference>
<dbReference type="Gene3D" id="3.30.70.240">
    <property type="match status" value="1"/>
</dbReference>
<dbReference type="Gene3D" id="3.30.70.2570">
    <property type="entry name" value="Elongation factor 4, C-terminal domain"/>
    <property type="match status" value="1"/>
</dbReference>
<dbReference type="Gene3D" id="3.30.70.870">
    <property type="entry name" value="Elongation Factor G (Translational Gtpase), domain 3"/>
    <property type="match status" value="1"/>
</dbReference>
<dbReference type="Gene3D" id="3.40.50.300">
    <property type="entry name" value="P-loop containing nucleotide triphosphate hydrolases"/>
    <property type="match status" value="1"/>
</dbReference>
<dbReference type="Gene3D" id="2.40.30.10">
    <property type="entry name" value="Translation factors"/>
    <property type="match status" value="1"/>
</dbReference>
<dbReference type="HAMAP" id="MF_00071">
    <property type="entry name" value="LepA"/>
    <property type="match status" value="1"/>
</dbReference>
<dbReference type="InterPro" id="IPR006297">
    <property type="entry name" value="EF-4"/>
</dbReference>
<dbReference type="InterPro" id="IPR035647">
    <property type="entry name" value="EFG_III/V"/>
</dbReference>
<dbReference type="InterPro" id="IPR000640">
    <property type="entry name" value="EFG_V-like"/>
</dbReference>
<dbReference type="InterPro" id="IPR004161">
    <property type="entry name" value="EFTu-like_2"/>
</dbReference>
<dbReference type="InterPro" id="IPR031157">
    <property type="entry name" value="G_TR_CS"/>
</dbReference>
<dbReference type="InterPro" id="IPR038363">
    <property type="entry name" value="LepA_C_sf"/>
</dbReference>
<dbReference type="InterPro" id="IPR013842">
    <property type="entry name" value="LepA_CTD"/>
</dbReference>
<dbReference type="InterPro" id="IPR035654">
    <property type="entry name" value="LepA_IV"/>
</dbReference>
<dbReference type="InterPro" id="IPR027417">
    <property type="entry name" value="P-loop_NTPase"/>
</dbReference>
<dbReference type="InterPro" id="IPR005225">
    <property type="entry name" value="Small_GTP-bd"/>
</dbReference>
<dbReference type="InterPro" id="IPR000795">
    <property type="entry name" value="T_Tr_GTP-bd_dom"/>
</dbReference>
<dbReference type="InterPro" id="IPR009000">
    <property type="entry name" value="Transl_B-barrel_sf"/>
</dbReference>
<dbReference type="NCBIfam" id="TIGR01393">
    <property type="entry name" value="lepA"/>
    <property type="match status" value="1"/>
</dbReference>
<dbReference type="NCBIfam" id="TIGR00231">
    <property type="entry name" value="small_GTP"/>
    <property type="match status" value="1"/>
</dbReference>
<dbReference type="PANTHER" id="PTHR43512:SF4">
    <property type="entry name" value="TRANSLATION FACTOR GUF1 HOMOLOG, CHLOROPLASTIC"/>
    <property type="match status" value="1"/>
</dbReference>
<dbReference type="PANTHER" id="PTHR43512">
    <property type="entry name" value="TRANSLATION FACTOR GUF1-RELATED"/>
    <property type="match status" value="1"/>
</dbReference>
<dbReference type="Pfam" id="PF00679">
    <property type="entry name" value="EFG_C"/>
    <property type="match status" value="1"/>
</dbReference>
<dbReference type="Pfam" id="PF00009">
    <property type="entry name" value="GTP_EFTU"/>
    <property type="match status" value="1"/>
</dbReference>
<dbReference type="Pfam" id="PF03144">
    <property type="entry name" value="GTP_EFTU_D2"/>
    <property type="match status" value="1"/>
</dbReference>
<dbReference type="Pfam" id="PF06421">
    <property type="entry name" value="LepA_C"/>
    <property type="match status" value="1"/>
</dbReference>
<dbReference type="PRINTS" id="PR00315">
    <property type="entry name" value="ELONGATNFCT"/>
</dbReference>
<dbReference type="SMART" id="SM00838">
    <property type="entry name" value="EFG_C"/>
    <property type="match status" value="1"/>
</dbReference>
<dbReference type="SUPFAM" id="SSF54980">
    <property type="entry name" value="EF-G C-terminal domain-like"/>
    <property type="match status" value="2"/>
</dbReference>
<dbReference type="SUPFAM" id="SSF52540">
    <property type="entry name" value="P-loop containing nucleoside triphosphate hydrolases"/>
    <property type="match status" value="1"/>
</dbReference>
<dbReference type="SUPFAM" id="SSF50447">
    <property type="entry name" value="Translation proteins"/>
    <property type="match status" value="1"/>
</dbReference>
<dbReference type="PROSITE" id="PS00301">
    <property type="entry name" value="G_TR_1"/>
    <property type="match status" value="1"/>
</dbReference>
<dbReference type="PROSITE" id="PS51722">
    <property type="entry name" value="G_TR_2"/>
    <property type="match status" value="1"/>
</dbReference>
<protein>
    <recommendedName>
        <fullName evidence="1">Elongation factor 4</fullName>
        <shortName evidence="1">EF-4</shortName>
        <ecNumber evidence="1">3.6.5.n1</ecNumber>
    </recommendedName>
    <alternativeName>
        <fullName evidence="1">Ribosomal back-translocase LepA</fullName>
    </alternativeName>
</protein>
<organism>
    <name type="scientific">Burkholderia vietnamiensis (strain G4 / LMG 22486)</name>
    <name type="common">Burkholderia cepacia (strain R1808)</name>
    <dbReference type="NCBI Taxonomy" id="269482"/>
    <lineage>
        <taxon>Bacteria</taxon>
        <taxon>Pseudomonadati</taxon>
        <taxon>Pseudomonadota</taxon>
        <taxon>Betaproteobacteria</taxon>
        <taxon>Burkholderiales</taxon>
        <taxon>Burkholderiaceae</taxon>
        <taxon>Burkholderia</taxon>
        <taxon>Burkholderia cepacia complex</taxon>
    </lineage>
</organism>
<reference key="1">
    <citation type="submission" date="2007-03" db="EMBL/GenBank/DDBJ databases">
        <title>Complete sequence of chromosome 1 of Burkholderia vietnamiensis G4.</title>
        <authorList>
            <consortium name="US DOE Joint Genome Institute"/>
            <person name="Copeland A."/>
            <person name="Lucas S."/>
            <person name="Lapidus A."/>
            <person name="Barry K."/>
            <person name="Detter J.C."/>
            <person name="Glavina del Rio T."/>
            <person name="Hammon N."/>
            <person name="Israni S."/>
            <person name="Dalin E."/>
            <person name="Tice H."/>
            <person name="Pitluck S."/>
            <person name="Chain P."/>
            <person name="Malfatti S."/>
            <person name="Shin M."/>
            <person name="Vergez L."/>
            <person name="Schmutz J."/>
            <person name="Larimer F."/>
            <person name="Land M."/>
            <person name="Hauser L."/>
            <person name="Kyrpides N."/>
            <person name="Tiedje J."/>
            <person name="Richardson P."/>
        </authorList>
    </citation>
    <scope>NUCLEOTIDE SEQUENCE [LARGE SCALE GENOMIC DNA]</scope>
    <source>
        <strain>G4 / LMG 22486</strain>
    </source>
</reference>
<accession>A4JCQ9</accession>
<keyword id="KW-0997">Cell inner membrane</keyword>
<keyword id="KW-1003">Cell membrane</keyword>
<keyword id="KW-0342">GTP-binding</keyword>
<keyword id="KW-0378">Hydrolase</keyword>
<keyword id="KW-0472">Membrane</keyword>
<keyword id="KW-0547">Nucleotide-binding</keyword>
<keyword id="KW-0648">Protein biosynthesis</keyword>
<gene>
    <name evidence="1" type="primary">lepA</name>
    <name type="ordered locus">Bcep1808_1051</name>
</gene>